<name>NCPP_SALAR</name>
<organism>
    <name type="scientific">Salmonella arizonae (strain ATCC BAA-731 / CDC346-86 / RSK2980)</name>
    <dbReference type="NCBI Taxonomy" id="41514"/>
    <lineage>
        <taxon>Bacteria</taxon>
        <taxon>Pseudomonadati</taxon>
        <taxon>Pseudomonadota</taxon>
        <taxon>Gammaproteobacteria</taxon>
        <taxon>Enterobacterales</taxon>
        <taxon>Enterobacteriaceae</taxon>
        <taxon>Salmonella</taxon>
    </lineage>
</organism>
<gene>
    <name type="primary">yjjX</name>
    <name type="ordered locus">SARI_02999</name>
</gene>
<dbReference type="EC" id="3.6.1.73" evidence="1"/>
<dbReference type="EMBL" id="CP000880">
    <property type="protein sequence ID" value="ABX22843.1"/>
    <property type="molecule type" value="Genomic_DNA"/>
</dbReference>
<dbReference type="SMR" id="A9MR95"/>
<dbReference type="STRING" id="41514.SARI_02999"/>
<dbReference type="KEGG" id="ses:SARI_02999"/>
<dbReference type="HOGENOM" id="CLU_087417_1_0_6"/>
<dbReference type="Proteomes" id="UP000002084">
    <property type="component" value="Chromosome"/>
</dbReference>
<dbReference type="GO" id="GO:0103023">
    <property type="term" value="F:ITPase activity"/>
    <property type="evidence" value="ECO:0007669"/>
    <property type="project" value="UniProtKB-EC"/>
</dbReference>
<dbReference type="GO" id="GO:0046872">
    <property type="term" value="F:metal ion binding"/>
    <property type="evidence" value="ECO:0007669"/>
    <property type="project" value="UniProtKB-KW"/>
</dbReference>
<dbReference type="GO" id="GO:0000166">
    <property type="term" value="F:nucleotide binding"/>
    <property type="evidence" value="ECO:0007669"/>
    <property type="project" value="UniProtKB-KW"/>
</dbReference>
<dbReference type="GO" id="GO:0017111">
    <property type="term" value="F:ribonucleoside triphosphate phosphatase activity"/>
    <property type="evidence" value="ECO:0000250"/>
    <property type="project" value="UniProtKB"/>
</dbReference>
<dbReference type="GO" id="GO:0009117">
    <property type="term" value="P:nucleotide metabolic process"/>
    <property type="evidence" value="ECO:0007669"/>
    <property type="project" value="UniProtKB-KW"/>
</dbReference>
<dbReference type="GO" id="GO:0006772">
    <property type="term" value="P:thiamine metabolic process"/>
    <property type="evidence" value="ECO:0007669"/>
    <property type="project" value="TreeGrafter"/>
</dbReference>
<dbReference type="FunFam" id="3.90.950.10:FF:000002">
    <property type="entry name" value="Inosine/xanthosine triphosphatase"/>
    <property type="match status" value="1"/>
</dbReference>
<dbReference type="Gene3D" id="3.90.950.10">
    <property type="match status" value="1"/>
</dbReference>
<dbReference type="HAMAP" id="MF_00648">
    <property type="entry name" value="Non_canon_purine_NTPase_YjjX"/>
    <property type="match status" value="1"/>
</dbReference>
<dbReference type="InterPro" id="IPR029001">
    <property type="entry name" value="ITPase-like_fam"/>
</dbReference>
<dbReference type="InterPro" id="IPR002786">
    <property type="entry name" value="Non_canon_purine_NTPase"/>
</dbReference>
<dbReference type="InterPro" id="IPR026533">
    <property type="entry name" value="NTPase/PRRC1"/>
</dbReference>
<dbReference type="InterPro" id="IPR050299">
    <property type="entry name" value="YjjX_NTPase"/>
</dbReference>
<dbReference type="NCBIfam" id="TIGR00258">
    <property type="entry name" value="inosine/xanthosine triphosphatase"/>
    <property type="match status" value="1"/>
</dbReference>
<dbReference type="NCBIfam" id="NF003459">
    <property type="entry name" value="PRK05074.1"/>
    <property type="match status" value="1"/>
</dbReference>
<dbReference type="PANTHER" id="PTHR34699">
    <property type="match status" value="1"/>
</dbReference>
<dbReference type="PANTHER" id="PTHR34699:SF2">
    <property type="entry name" value="NON-CANONICAL PURINE NTP PHOSPHATASE_PRRC1 DOMAIN-CONTAINING PROTEIN"/>
    <property type="match status" value="1"/>
</dbReference>
<dbReference type="Pfam" id="PF01931">
    <property type="entry name" value="NTPase_I-T"/>
    <property type="match status" value="1"/>
</dbReference>
<dbReference type="SUPFAM" id="SSF52972">
    <property type="entry name" value="ITPase-like"/>
    <property type="match status" value="1"/>
</dbReference>
<comment type="function">
    <text evidence="1">Phosphatase that hydrolyzes non-canonical purine nucleotides such as XTP and ITP to their respective diphosphate derivatives. Probably excludes non-canonical purines from DNA/RNA precursor pool, thus preventing their incorporation into DNA/RNA and avoiding chromosomal lesions.</text>
</comment>
<comment type="catalytic activity">
    <reaction evidence="1">
        <text>XTP + H2O = XDP + phosphate + H(+)</text>
        <dbReference type="Rhea" id="RHEA:28406"/>
        <dbReference type="ChEBI" id="CHEBI:15377"/>
        <dbReference type="ChEBI" id="CHEBI:15378"/>
        <dbReference type="ChEBI" id="CHEBI:43474"/>
        <dbReference type="ChEBI" id="CHEBI:59884"/>
        <dbReference type="ChEBI" id="CHEBI:61314"/>
        <dbReference type="EC" id="3.6.1.73"/>
    </reaction>
</comment>
<comment type="catalytic activity">
    <reaction evidence="1">
        <text>ITP + H2O = IDP + phosphate + H(+)</text>
        <dbReference type="Rhea" id="RHEA:28330"/>
        <dbReference type="ChEBI" id="CHEBI:15377"/>
        <dbReference type="ChEBI" id="CHEBI:15378"/>
        <dbReference type="ChEBI" id="CHEBI:43474"/>
        <dbReference type="ChEBI" id="CHEBI:58280"/>
        <dbReference type="ChEBI" id="CHEBI:61402"/>
        <dbReference type="EC" id="3.6.1.73"/>
    </reaction>
</comment>
<comment type="cofactor">
    <cofactor evidence="1">
        <name>Mg(2+)</name>
        <dbReference type="ChEBI" id="CHEBI:18420"/>
    </cofactor>
    <cofactor evidence="1">
        <name>Mn(2+)</name>
        <dbReference type="ChEBI" id="CHEBI:29035"/>
    </cofactor>
    <text evidence="1">Binds 1 divalent metal cation per subunit; can use either Mg(2+) or Mn(2+).</text>
</comment>
<comment type="subunit">
    <text evidence="1">Homodimer.</text>
</comment>
<comment type="similarity">
    <text evidence="1">Belongs to the YjjX NTPase family.</text>
</comment>
<proteinExistence type="inferred from homology"/>
<keyword id="KW-0378">Hydrolase</keyword>
<keyword id="KW-0460">Magnesium</keyword>
<keyword id="KW-0464">Manganese</keyword>
<keyword id="KW-0479">Metal-binding</keyword>
<keyword id="KW-0546">Nucleotide metabolism</keyword>
<keyword id="KW-0547">Nucleotide-binding</keyword>
<keyword id="KW-1185">Reference proteome</keyword>
<reference key="1">
    <citation type="submission" date="2007-11" db="EMBL/GenBank/DDBJ databases">
        <authorList>
            <consortium name="The Salmonella enterica serovar Arizonae Genome Sequencing Project"/>
            <person name="McClelland M."/>
            <person name="Sanderson E.K."/>
            <person name="Porwollik S."/>
            <person name="Spieth J."/>
            <person name="Clifton W.S."/>
            <person name="Fulton R."/>
            <person name="Chunyan W."/>
            <person name="Wollam A."/>
            <person name="Shah N."/>
            <person name="Pepin K."/>
            <person name="Bhonagiri V."/>
            <person name="Nash W."/>
            <person name="Johnson M."/>
            <person name="Thiruvilangam P."/>
            <person name="Wilson R."/>
        </authorList>
    </citation>
    <scope>NUCLEOTIDE SEQUENCE [LARGE SCALE GENOMIC DNA]</scope>
    <source>
        <strain>ATCC BAA-731 / CDC346-86 / RSK2980</strain>
    </source>
</reference>
<feature type="chain" id="PRO_1000082718" description="Inosine/xanthosine triphosphatase">
    <location>
        <begin position="1"/>
        <end position="171"/>
    </location>
</feature>
<feature type="binding site" evidence="1">
    <location>
        <begin position="8"/>
        <end position="13"/>
    </location>
    <ligand>
        <name>substrate</name>
    </ligand>
</feature>
<feature type="binding site" evidence="1">
    <location>
        <position position="38"/>
    </location>
    <ligand>
        <name>Mg(2+)</name>
        <dbReference type="ChEBI" id="CHEBI:18420"/>
    </ligand>
</feature>
<feature type="binding site" evidence="1">
    <location>
        <begin position="68"/>
        <end position="69"/>
    </location>
    <ligand>
        <name>substrate</name>
    </ligand>
</feature>
<feature type="binding site" evidence="1">
    <location>
        <position position="68"/>
    </location>
    <ligand>
        <name>Mg(2+)</name>
        <dbReference type="ChEBI" id="CHEBI:18420"/>
    </ligand>
</feature>
<sequence length="171" mass="18435">MHQVISATTNPAKIQAILQAFEEIFGEGSCHITPIAVESGVPEQPFGSEETRTGARNRVANARLLCPEADFWVAIEAGIDDNSTFSWVVIESVELRGESRSATLPLPAVILENVRAGDALGPVMSRYTGIDEIGRKEGAIGIFTAGKLTRSSVYHQAVILALSPFHNAVYR</sequence>
<protein>
    <recommendedName>
        <fullName evidence="1">Inosine/xanthosine triphosphatase</fullName>
        <shortName evidence="1">ITPase/XTPase</shortName>
        <ecNumber evidence="1">3.6.1.73</ecNumber>
    </recommendedName>
    <alternativeName>
        <fullName evidence="1">Non-canonical purine NTP phosphatase</fullName>
    </alternativeName>
    <alternativeName>
        <fullName evidence="1">Non-standard purine NTP phosphatase</fullName>
    </alternativeName>
    <alternativeName>
        <fullName evidence="1">Nucleoside-triphosphate phosphatase</fullName>
        <shortName evidence="1">NTPase</shortName>
    </alternativeName>
</protein>
<accession>A9MR95</accession>
<evidence type="ECO:0000255" key="1">
    <source>
        <dbReference type="HAMAP-Rule" id="MF_00648"/>
    </source>
</evidence>